<organism>
    <name type="scientific">Papaya ringspot virus (strain W)</name>
    <dbReference type="NCBI Taxonomy" id="12207"/>
    <lineage>
        <taxon>Viruses</taxon>
        <taxon>Riboviria</taxon>
        <taxon>Orthornavirae</taxon>
        <taxon>Pisuviricota</taxon>
        <taxon>Stelpaviricetes</taxon>
        <taxon>Patatavirales</taxon>
        <taxon>Potyviridae</taxon>
        <taxon>Potyvirus</taxon>
        <taxon>Potyvirus papayanuli</taxon>
        <taxon>Papaya ringspot virus</taxon>
    </lineage>
</organism>
<name>POLG_PRSVW</name>
<dbReference type="EC" id="2.7.7.48"/>
<dbReference type="EMBL" id="D00594">
    <property type="protein sequence ID" value="BAA00470.1"/>
    <property type="molecule type" value="Genomic_RNA"/>
</dbReference>
<dbReference type="PIR" id="JQ0497">
    <property type="entry name" value="JQ0497"/>
</dbReference>
<dbReference type="SMR" id="P19724"/>
<dbReference type="ABCD" id="P19724">
    <property type="antibodies" value="1 sequenced antibody"/>
</dbReference>
<dbReference type="GO" id="GO:0019028">
    <property type="term" value="C:viral capsid"/>
    <property type="evidence" value="ECO:0007669"/>
    <property type="project" value="UniProtKB-KW"/>
</dbReference>
<dbReference type="GO" id="GO:0000166">
    <property type="term" value="F:nucleotide binding"/>
    <property type="evidence" value="ECO:0007669"/>
    <property type="project" value="UniProtKB-KW"/>
</dbReference>
<dbReference type="GO" id="GO:0003723">
    <property type="term" value="F:RNA binding"/>
    <property type="evidence" value="ECO:0007669"/>
    <property type="project" value="InterPro"/>
</dbReference>
<dbReference type="GO" id="GO:0003968">
    <property type="term" value="F:RNA-directed RNA polymerase activity"/>
    <property type="evidence" value="ECO:0007669"/>
    <property type="project" value="UniProtKB-KW"/>
</dbReference>
<dbReference type="GO" id="GO:0006351">
    <property type="term" value="P:DNA-templated transcription"/>
    <property type="evidence" value="ECO:0007669"/>
    <property type="project" value="InterPro"/>
</dbReference>
<dbReference type="GO" id="GO:0039694">
    <property type="term" value="P:viral RNA genome replication"/>
    <property type="evidence" value="ECO:0007669"/>
    <property type="project" value="InterPro"/>
</dbReference>
<dbReference type="CDD" id="cd23175">
    <property type="entry name" value="ps-ssRNAv_Potyviridae_RdRp"/>
    <property type="match status" value="1"/>
</dbReference>
<dbReference type="Gene3D" id="3.30.70.270">
    <property type="match status" value="1"/>
</dbReference>
<dbReference type="InterPro" id="IPR043502">
    <property type="entry name" value="DNA/RNA_pol_sf"/>
</dbReference>
<dbReference type="InterPro" id="IPR001592">
    <property type="entry name" value="Poty_coat"/>
</dbReference>
<dbReference type="InterPro" id="IPR043128">
    <property type="entry name" value="Rev_trsase/Diguanyl_cyclase"/>
</dbReference>
<dbReference type="InterPro" id="IPR001205">
    <property type="entry name" value="RNA-dir_pol_C"/>
</dbReference>
<dbReference type="InterPro" id="IPR007094">
    <property type="entry name" value="RNA-dir_pol_PSvirus"/>
</dbReference>
<dbReference type="Pfam" id="PF00767">
    <property type="entry name" value="Poty_coat"/>
    <property type="match status" value="1"/>
</dbReference>
<dbReference type="Pfam" id="PF00680">
    <property type="entry name" value="RdRP_1"/>
    <property type="match status" value="1"/>
</dbReference>
<dbReference type="SUPFAM" id="SSF56672">
    <property type="entry name" value="DNA/RNA polymerases"/>
    <property type="match status" value="1"/>
</dbReference>
<dbReference type="PROSITE" id="PS50507">
    <property type="entry name" value="RDRP_SSRNA_POS"/>
    <property type="match status" value="1"/>
</dbReference>
<proteinExistence type="inferred from homology"/>
<evidence type="ECO:0000250" key="1"/>
<evidence type="ECO:0000250" key="2">
    <source>
        <dbReference type="UniProtKB" id="P04517"/>
    </source>
</evidence>
<evidence type="ECO:0000255" key="3">
    <source>
        <dbReference type="PROSITE-ProRule" id="PRU00539"/>
    </source>
</evidence>
<evidence type="ECO:0000256" key="4">
    <source>
        <dbReference type="SAM" id="MobiDB-lite"/>
    </source>
</evidence>
<evidence type="ECO:0000305" key="5"/>
<keyword id="KW-0167">Capsid protein</keyword>
<keyword id="KW-0547">Nucleotide-binding</keyword>
<keyword id="KW-0548">Nucleotidyltransferase</keyword>
<keyword id="KW-0696">RNA-directed RNA polymerase</keyword>
<keyword id="KW-0808">Transferase</keyword>
<keyword id="KW-0693">Viral RNA replication</keyword>
<keyword id="KW-0946">Virion</keyword>
<accession>P19724</accession>
<reference key="1">
    <citation type="journal article" date="1990" name="J. Gen. Virol.">
        <title>The nucleotide sequences of the 3'-terminal regions of papaya ringspot virus strains W and P.</title>
        <authorList>
            <person name="Quemada H."/>
            <person name="L'Hostis B."/>
            <person name="Gonsalves D."/>
            <person name="Reardon I.M."/>
            <person name="Heinrikson R."/>
            <person name="Hiebert E.L."/>
            <person name="Sieu L.C."/>
            <person name="Slightom J.L."/>
        </authorList>
    </citation>
    <scope>NUCLEOTIDE SEQUENCE [GENOMIC RNA]</scope>
</reference>
<reference key="2">
    <citation type="journal article" date="2001" name="Virus Res.">
        <title>Potyvirus proteins: a wealth of functions.</title>
        <authorList>
            <person name="Urcuqui-Inchima S."/>
            <person name="Haenni A.L."/>
            <person name="Bernardi F."/>
        </authorList>
    </citation>
    <scope>REVIEW</scope>
</reference>
<comment type="function">
    <molecule>Nuclear inclusion protein B</molecule>
    <text>An RNA-dependent RNA polymerase that plays an essential role in the virus replication.</text>
</comment>
<comment type="function">
    <molecule>Capsid protein</molecule>
    <text evidence="2">Involved in aphid transmission, cell-to-cell and systemis movement, encapsidation of the viral RNA and in the regulation of viral RNA amplification.</text>
</comment>
<comment type="catalytic activity">
    <reaction evidence="3">
        <text>RNA(n) + a ribonucleoside 5'-triphosphate = RNA(n+1) + diphosphate</text>
        <dbReference type="Rhea" id="RHEA:21248"/>
        <dbReference type="Rhea" id="RHEA-COMP:14527"/>
        <dbReference type="Rhea" id="RHEA-COMP:17342"/>
        <dbReference type="ChEBI" id="CHEBI:33019"/>
        <dbReference type="ChEBI" id="CHEBI:61557"/>
        <dbReference type="ChEBI" id="CHEBI:140395"/>
        <dbReference type="EC" id="2.7.7.48"/>
    </reaction>
</comment>
<comment type="subcellular location">
    <molecule>Capsid protein</molecule>
    <subcellularLocation>
        <location evidence="5">Virion</location>
    </subcellularLocation>
</comment>
<comment type="PTM">
    <text evidence="1">Genome polyprotein of potyviruses undergoes post-translational proteolytic processing by the main proteinase NIa-pro resulting in the production of at least ten individual proteins. The P1 proteinase and the HC-pro cleave only their respective C-termini autocatalytically. 6K1 is essential for proper proteolytic separation of P3 from CI (By similarity).</text>
</comment>
<comment type="similarity">
    <text evidence="5">Belongs to the potyviridae genome polyprotein family.</text>
</comment>
<feature type="chain" id="PRO_0000040373" description="Nuclear inclusion protein B" evidence="1">
    <location>
        <begin position="1" status="less than"/>
        <end position="388"/>
    </location>
</feature>
<feature type="chain" id="PRO_0000420012" description="Genome polyprotein">
    <location>
        <begin position="1"/>
        <end position="675"/>
    </location>
</feature>
<feature type="chain" id="PRO_0000040374" description="Capsid protein" evidence="1">
    <location>
        <begin position="389"/>
        <end position="675"/>
    </location>
</feature>
<feature type="domain" description="RdRp catalytic" evidence="3">
    <location>
        <begin position="92"/>
        <end position="216"/>
    </location>
</feature>
<feature type="region of interest" description="Disordered" evidence="4">
    <location>
        <begin position="390"/>
        <end position="447"/>
    </location>
</feature>
<feature type="compositionally biased region" description="Basic and acidic residues" evidence="4">
    <location>
        <begin position="390"/>
        <end position="424"/>
    </location>
</feature>
<feature type="site" description="Cleavage; by NIa-pro" evidence="1">
    <location>
        <begin position="388"/>
        <end position="389"/>
    </location>
</feature>
<feature type="non-terminal residue">
    <location>
        <position position="1"/>
    </location>
</feature>
<sequence length="675" mass="78151">LVRKSCERLYEGRMGVWNGSLKAELRPAEKVLAKKTRSFTAAPLDTLLGAKVCVDDFNNWFYSKNMECPWTVGMTKFYKGWDEFLRKFPDGWVYCDADGSQFDSSLTPYLLNAVLSIRLWAMEDWDIGEQMLKNLYGEITYTPILTPDGTIVKKFKGNNSGQPSTVVDNTLMVLITMYYALRKAGYDTKTQEDMCVFYINGDDLCIAIHPDHEHVLDSFSRSFAELGLKYDFTQRHRNKQNLWFMSHRGILIDDIYIPKLEPERIVAILEWDKSKLPEHRLEAITAAMIESWGYGDLTHQIRRFYQWVLEQAPFNELAKQGRAPYVSEVGLRRLYTSERGSMDELEAYIDKYFERERGDSPELLVYHESRSTDDYQLVCSNNTHVFHQSKNEAVDTGLNEKFKEKEKQKEKEKEKQKEKEKDDASDGNDVSTSTKTGERDRDVNVGTSGTFTVPRIKSFTDKMILPRIKGKSVLNLNHLLQYNPQQIDISNTRATQSQFEKWYEGVRNDYGLNDNEMQVMLNGLMVWCIENGTSPDISGVWVMMDGETQVDYPIKPLIEHATPSFRQIMAHFSNAAEAYIAKRNATERYMPRYGIKRNLTDISLARYAFDFYEVNSKTPDRAREAHMQMKAAALRNTSRRMFGMDGSVSNKEENTERHTVEDVNRDMHSLLGMRN</sequence>
<organismHost>
    <name type="scientific">Citrullus lanatus</name>
    <name type="common">Watermelon</name>
    <name type="synonym">Citrullus vulgaris</name>
    <dbReference type="NCBI Taxonomy" id="3654"/>
</organismHost>
<organismHost>
    <name type="scientific">Cucurbita pepo</name>
    <name type="common">Vegetable marrow</name>
    <name type="synonym">Summer squash</name>
    <dbReference type="NCBI Taxonomy" id="3663"/>
</organismHost>
<organismHost>
    <name type="scientific">Momordica charantia</name>
    <name type="common">Bitter gourd</name>
    <name type="synonym">Balsam pear</name>
    <dbReference type="NCBI Taxonomy" id="3673"/>
</organismHost>
<protein>
    <recommendedName>
        <fullName>Genome polyprotein</fullName>
    </recommendedName>
    <component>
        <recommendedName>
            <fullName>Nuclear inclusion protein B</fullName>
            <shortName>NI-B</shortName>
            <shortName>NIB</shortName>
        </recommendedName>
        <alternativeName>
            <fullName>RNA-directed RNA polymerase</fullName>
            <ecNumber>2.7.7.48</ecNumber>
        </alternativeName>
    </component>
    <component>
        <recommendedName>
            <fullName>Capsid protein</fullName>
            <shortName>CP</shortName>
        </recommendedName>
        <alternativeName>
            <fullName>Coat protein</fullName>
        </alternativeName>
    </component>
</protein>